<proteinExistence type="inferred from homology"/>
<comment type="function">
    <text evidence="1">Binds 16S rRNA, required for the assembly of 30S particles and may also be responsible for determining the conformation of the 16S rRNA at the A site.</text>
</comment>
<comment type="subunit">
    <text evidence="1">Part of the 30S ribosomal subunit. Contacts proteins S3 and S10.</text>
</comment>
<comment type="similarity">
    <text evidence="1">Belongs to the universal ribosomal protein uS14 family.</text>
</comment>
<gene>
    <name evidence="1" type="primary">rpsN</name>
    <name type="ordered locus">Pmen_3896</name>
</gene>
<organism>
    <name type="scientific">Ectopseudomonas mendocina (strain ymp)</name>
    <name type="common">Pseudomonas mendocina</name>
    <dbReference type="NCBI Taxonomy" id="399739"/>
    <lineage>
        <taxon>Bacteria</taxon>
        <taxon>Pseudomonadati</taxon>
        <taxon>Pseudomonadota</taxon>
        <taxon>Gammaproteobacteria</taxon>
        <taxon>Pseudomonadales</taxon>
        <taxon>Pseudomonadaceae</taxon>
        <taxon>Ectopseudomonas</taxon>
    </lineage>
</organism>
<sequence length="101" mass="11501">MAKTSMKNRELKRQQTVAKYAKKRAELKAIIANPNSTPEARWEAQVALQKQPRDASASRLRNRCRITGRPHGVYRKFGLSRNKLREAAMRGDVPGLVKASW</sequence>
<keyword id="KW-0687">Ribonucleoprotein</keyword>
<keyword id="KW-0689">Ribosomal protein</keyword>
<keyword id="KW-0694">RNA-binding</keyword>
<keyword id="KW-0699">rRNA-binding</keyword>
<protein>
    <recommendedName>
        <fullName evidence="1">Small ribosomal subunit protein uS14</fullName>
    </recommendedName>
    <alternativeName>
        <fullName evidence="2">30S ribosomal protein S14</fullName>
    </alternativeName>
</protein>
<feature type="chain" id="PRO_1000128516" description="Small ribosomal subunit protein uS14">
    <location>
        <begin position="1"/>
        <end position="101"/>
    </location>
</feature>
<reference key="1">
    <citation type="submission" date="2007-04" db="EMBL/GenBank/DDBJ databases">
        <title>Complete sequence of Pseudomonas mendocina ymp.</title>
        <authorList>
            <consortium name="US DOE Joint Genome Institute"/>
            <person name="Copeland A."/>
            <person name="Lucas S."/>
            <person name="Lapidus A."/>
            <person name="Barry K."/>
            <person name="Glavina del Rio T."/>
            <person name="Dalin E."/>
            <person name="Tice H."/>
            <person name="Pitluck S."/>
            <person name="Kiss H."/>
            <person name="Brettin T."/>
            <person name="Detter J.C."/>
            <person name="Bruce D."/>
            <person name="Han C."/>
            <person name="Schmutz J."/>
            <person name="Larimer F."/>
            <person name="Land M."/>
            <person name="Hauser L."/>
            <person name="Kyrpides N."/>
            <person name="Mikhailova N."/>
            <person name="Hersman L."/>
            <person name="Dubois J."/>
            <person name="Maurice P."/>
            <person name="Richardson P."/>
        </authorList>
    </citation>
    <scope>NUCLEOTIDE SEQUENCE [LARGE SCALE GENOMIC DNA]</scope>
    <source>
        <strain>ymp</strain>
    </source>
</reference>
<accession>A4XZ77</accession>
<dbReference type="EMBL" id="CP000680">
    <property type="protein sequence ID" value="ABP86643.1"/>
    <property type="molecule type" value="Genomic_DNA"/>
</dbReference>
<dbReference type="SMR" id="A4XZ77"/>
<dbReference type="STRING" id="399739.Pmen_3896"/>
<dbReference type="KEGG" id="pmy:Pmen_3896"/>
<dbReference type="PATRIC" id="fig|399739.8.peg.3949"/>
<dbReference type="eggNOG" id="COG0199">
    <property type="taxonomic scope" value="Bacteria"/>
</dbReference>
<dbReference type="HOGENOM" id="CLU_139869_0_1_6"/>
<dbReference type="OrthoDB" id="9810484at2"/>
<dbReference type="GO" id="GO:0005737">
    <property type="term" value="C:cytoplasm"/>
    <property type="evidence" value="ECO:0007669"/>
    <property type="project" value="UniProtKB-ARBA"/>
</dbReference>
<dbReference type="GO" id="GO:0015935">
    <property type="term" value="C:small ribosomal subunit"/>
    <property type="evidence" value="ECO:0007669"/>
    <property type="project" value="TreeGrafter"/>
</dbReference>
<dbReference type="GO" id="GO:0019843">
    <property type="term" value="F:rRNA binding"/>
    <property type="evidence" value="ECO:0007669"/>
    <property type="project" value="UniProtKB-UniRule"/>
</dbReference>
<dbReference type="GO" id="GO:0003735">
    <property type="term" value="F:structural constituent of ribosome"/>
    <property type="evidence" value="ECO:0007669"/>
    <property type="project" value="InterPro"/>
</dbReference>
<dbReference type="GO" id="GO:0006412">
    <property type="term" value="P:translation"/>
    <property type="evidence" value="ECO:0007669"/>
    <property type="project" value="UniProtKB-UniRule"/>
</dbReference>
<dbReference type="FunFam" id="1.10.287.1480:FF:000001">
    <property type="entry name" value="30S ribosomal protein S14"/>
    <property type="match status" value="1"/>
</dbReference>
<dbReference type="Gene3D" id="1.10.287.1480">
    <property type="match status" value="1"/>
</dbReference>
<dbReference type="HAMAP" id="MF_00537">
    <property type="entry name" value="Ribosomal_uS14_1"/>
    <property type="match status" value="1"/>
</dbReference>
<dbReference type="InterPro" id="IPR001209">
    <property type="entry name" value="Ribosomal_uS14"/>
</dbReference>
<dbReference type="InterPro" id="IPR023036">
    <property type="entry name" value="Ribosomal_uS14_bac/plastid"/>
</dbReference>
<dbReference type="InterPro" id="IPR018271">
    <property type="entry name" value="Ribosomal_uS14_CS"/>
</dbReference>
<dbReference type="NCBIfam" id="NF006477">
    <property type="entry name" value="PRK08881.1"/>
    <property type="match status" value="1"/>
</dbReference>
<dbReference type="PANTHER" id="PTHR19836">
    <property type="entry name" value="30S RIBOSOMAL PROTEIN S14"/>
    <property type="match status" value="1"/>
</dbReference>
<dbReference type="PANTHER" id="PTHR19836:SF19">
    <property type="entry name" value="SMALL RIBOSOMAL SUBUNIT PROTEIN US14M"/>
    <property type="match status" value="1"/>
</dbReference>
<dbReference type="Pfam" id="PF00253">
    <property type="entry name" value="Ribosomal_S14"/>
    <property type="match status" value="1"/>
</dbReference>
<dbReference type="SUPFAM" id="SSF57716">
    <property type="entry name" value="Glucocorticoid receptor-like (DNA-binding domain)"/>
    <property type="match status" value="1"/>
</dbReference>
<dbReference type="PROSITE" id="PS00527">
    <property type="entry name" value="RIBOSOMAL_S14"/>
    <property type="match status" value="1"/>
</dbReference>
<name>RS14_ECTM1</name>
<evidence type="ECO:0000255" key="1">
    <source>
        <dbReference type="HAMAP-Rule" id="MF_00537"/>
    </source>
</evidence>
<evidence type="ECO:0000305" key="2"/>